<feature type="propeptide" id="PRO_0000443737" evidence="6">
    <location>
        <begin position="1"/>
        <end position="10"/>
    </location>
</feature>
<feature type="peptide" id="PRO_0000443738" description="Phallacidin" evidence="6">
    <location>
        <begin position="11"/>
        <end position="17"/>
    </location>
</feature>
<feature type="propeptide" id="PRO_0000443739" evidence="6">
    <location>
        <begin position="18"/>
        <end position="34"/>
    </location>
</feature>
<feature type="cross-link" description="Cyclopeptide (Ala-Pro)" evidence="6">
    <location>
        <begin position="11"/>
        <end position="17"/>
    </location>
</feature>
<feature type="cross-link" description="2'-cysteinyl-6'-hydroxytryptophan sulfoxide (Trp-Cys)" evidence="2">
    <location>
        <begin position="12"/>
        <end position="16"/>
    </location>
</feature>
<sequence>MSDINATRLPAWLVDCPCVGDDVNRLLTRGESLC</sequence>
<keyword id="KW-0883">Thioether bond</keyword>
<keyword id="KW-0800">Toxin</keyword>
<evidence type="ECO:0000250" key="1">
    <source>
        <dbReference type="UniProtKB" id="A0A067SLB9"/>
    </source>
</evidence>
<evidence type="ECO:0000250" key="2">
    <source>
        <dbReference type="UniProtKB" id="P85421"/>
    </source>
</evidence>
<evidence type="ECO:0000269" key="3">
    <source>
    </source>
</evidence>
<evidence type="ECO:0000303" key="4">
    <source>
    </source>
</evidence>
<evidence type="ECO:0000305" key="5"/>
<evidence type="ECO:0000305" key="6">
    <source>
    </source>
</evidence>
<gene>
    <name evidence="4" type="primary">PHA</name>
</gene>
<dbReference type="EMBL" id="KF387478">
    <property type="protein sequence ID" value="AGW83702.1"/>
    <property type="molecule type" value="mRNA"/>
</dbReference>
<dbReference type="EMBL" id="KF387488">
    <property type="protein sequence ID" value="AGW83712.1"/>
    <property type="molecule type" value="mRNA"/>
</dbReference>
<dbReference type="EMBL" id="KF793337">
    <property type="protein sequence ID" value="AIS72234.1"/>
    <property type="molecule type" value="mRNA"/>
</dbReference>
<dbReference type="GO" id="GO:0090729">
    <property type="term" value="F:toxin activity"/>
    <property type="evidence" value="ECO:0007669"/>
    <property type="project" value="UniProtKB-KW"/>
</dbReference>
<dbReference type="InterPro" id="IPR027582">
    <property type="entry name" value="Amanitin/phalloidin"/>
</dbReference>
<dbReference type="NCBIfam" id="TIGR04309">
    <property type="entry name" value="amanitin"/>
    <property type="match status" value="1"/>
</dbReference>
<comment type="function">
    <text evidence="6">Toxin that belongs to the bicyclic heptapeptides called phallotoxins (PubMed:24050899). Although structurally related to amatoxins, phallotoxins have a different mode of action, which is the stabilization of F-actin (PubMed:24050899). Phallotoxins are poisonous when administered parenterally, but not orally because of poor absorption (PubMed:24050899).</text>
</comment>
<comment type="tissue specificity">
    <text evidence="3">Expressed in basidiocarps (PubMed:24050899).</text>
</comment>
<comment type="PTM">
    <text evidence="1">Processed by the macrocyclase-peptidase enzyme POPB to yield a toxic cyclic heptapeptide (By similarity). POPB first removes 10 residues from the N-terminus (By similarity). Conformational trapping of the remaining peptide forces the enzyme to release this intermediate rather than proceed to macrocyclization (By similarity). The enzyme rebinds the remaining peptide in a different conformation and catalyzes macrocyclization of the N-terminal 7 residues (By similarity).</text>
</comment>
<comment type="similarity">
    <text evidence="5">Belongs to the MSDIN fungal toxin family.</text>
</comment>
<name>PHAT2_AMAEX</name>
<organism>
    <name type="scientific">Amanita exitialis</name>
    <name type="common">Guangzhou destroying angel</name>
    <dbReference type="NCBI Taxonomy" id="262245"/>
    <lineage>
        <taxon>Eukaryota</taxon>
        <taxon>Fungi</taxon>
        <taxon>Dikarya</taxon>
        <taxon>Basidiomycota</taxon>
        <taxon>Agaricomycotina</taxon>
        <taxon>Agaricomycetes</taxon>
        <taxon>Agaricomycetidae</taxon>
        <taxon>Agaricales</taxon>
        <taxon>Pluteineae</taxon>
        <taxon>Amanitaceae</taxon>
        <taxon>Amanita</taxon>
    </lineage>
</organism>
<reference key="1">
    <citation type="journal article" date="2013" name="Gene">
        <title>Illumina-based de novo transcriptome sequencing and analysis of Amanita exitialis basidiocarps.</title>
        <authorList>
            <person name="Li P."/>
            <person name="Deng W.Q."/>
            <person name="Li T.H."/>
            <person name="Song B."/>
            <person name="Shen Y.H."/>
        </authorList>
    </citation>
    <scope>NUCLEOTIDE SEQUENCE [MRNA]</scope>
    <scope>FUNCTION</scope>
    <scope>TISSUE SPECIFICITY</scope>
</reference>
<protein>
    <recommendedName>
        <fullName evidence="4">Phallacidin proprotein 2</fullName>
    </recommendedName>
    <component>
        <recommendedName>
            <fullName evidence="4">Phallacidin</fullName>
        </recommendedName>
    </component>
</protein>
<accession>U5L397</accession>
<proteinExistence type="evidence at transcript level"/>